<protein>
    <recommendedName>
        <fullName evidence="1">Cell division protein ZapB</fullName>
    </recommendedName>
</protein>
<organism>
    <name type="scientific">Salmonella typhi</name>
    <dbReference type="NCBI Taxonomy" id="90370"/>
    <lineage>
        <taxon>Bacteria</taxon>
        <taxon>Pseudomonadati</taxon>
        <taxon>Pseudomonadota</taxon>
        <taxon>Gammaproteobacteria</taxon>
        <taxon>Enterobacterales</taxon>
        <taxon>Enterobacteriaceae</taxon>
        <taxon>Salmonella</taxon>
    </lineage>
</organism>
<comment type="function">
    <text evidence="1">Non-essential, abundant cell division factor that is required for proper Z-ring formation. It is recruited early to the divisome by direct interaction with FtsZ, stimulating Z-ring assembly and thereby promoting cell division earlier in the cell cycle. Its recruitment to the Z-ring requires functional FtsA or ZipA.</text>
</comment>
<comment type="subunit">
    <text evidence="1">Homodimer. The ends of the coiled-coil dimer bind to each other, forming polymers. Interacts with FtsZ.</text>
</comment>
<comment type="subcellular location">
    <subcellularLocation>
        <location>Cytoplasm</location>
    </subcellularLocation>
    <text evidence="1">Localizes to the septum at mid-cell, in a FtsZ-like pattern.</text>
</comment>
<comment type="similarity">
    <text evidence="1">Belongs to the ZapB family.</text>
</comment>
<sequence length="79" mass="9373">MSLEVFEKLEAKVQQAIDTITLLQMEIEELKEKNNSLTQEVQSAQHQREELERENNFLKEQQSGWQERLQALLGRMEEV</sequence>
<accession>Q8Z2Y8</accession>
<accession>Q7C6A9</accession>
<reference key="1">
    <citation type="journal article" date="2001" name="Nature">
        <title>Complete genome sequence of a multiple drug resistant Salmonella enterica serovar Typhi CT18.</title>
        <authorList>
            <person name="Parkhill J."/>
            <person name="Dougan G."/>
            <person name="James K.D."/>
            <person name="Thomson N.R."/>
            <person name="Pickard D."/>
            <person name="Wain J."/>
            <person name="Churcher C.M."/>
            <person name="Mungall K.L."/>
            <person name="Bentley S.D."/>
            <person name="Holden M.T.G."/>
            <person name="Sebaihia M."/>
            <person name="Baker S."/>
            <person name="Basham D."/>
            <person name="Brooks K."/>
            <person name="Chillingworth T."/>
            <person name="Connerton P."/>
            <person name="Cronin A."/>
            <person name="Davis P."/>
            <person name="Davies R.M."/>
            <person name="Dowd L."/>
            <person name="White N."/>
            <person name="Farrar J."/>
            <person name="Feltwell T."/>
            <person name="Hamlin N."/>
            <person name="Haque A."/>
            <person name="Hien T.T."/>
            <person name="Holroyd S."/>
            <person name="Jagels K."/>
            <person name="Krogh A."/>
            <person name="Larsen T.S."/>
            <person name="Leather S."/>
            <person name="Moule S."/>
            <person name="O'Gaora P."/>
            <person name="Parry C."/>
            <person name="Quail M.A."/>
            <person name="Rutherford K.M."/>
            <person name="Simmonds M."/>
            <person name="Skelton J."/>
            <person name="Stevens K."/>
            <person name="Whitehead S."/>
            <person name="Barrell B.G."/>
        </authorList>
    </citation>
    <scope>NUCLEOTIDE SEQUENCE [LARGE SCALE GENOMIC DNA]</scope>
    <source>
        <strain>CT18</strain>
    </source>
</reference>
<reference key="2">
    <citation type="journal article" date="2003" name="J. Bacteriol.">
        <title>Comparative genomics of Salmonella enterica serovar Typhi strains Ty2 and CT18.</title>
        <authorList>
            <person name="Deng W."/>
            <person name="Liou S.-R."/>
            <person name="Plunkett G. III"/>
            <person name="Mayhew G.F."/>
            <person name="Rose D.J."/>
            <person name="Burland V."/>
            <person name="Kodoyianni V."/>
            <person name="Schwartz D.C."/>
            <person name="Blattner F.R."/>
        </authorList>
    </citation>
    <scope>NUCLEOTIDE SEQUENCE [LARGE SCALE GENOMIC DNA]</scope>
    <source>
        <strain>ATCC 700931 / Ty2</strain>
    </source>
</reference>
<dbReference type="EMBL" id="AE014613">
    <property type="protein sequence ID" value="AAO71037.1"/>
    <property type="molecule type" value="Genomic_DNA"/>
</dbReference>
<dbReference type="EMBL" id="AL513382">
    <property type="protein sequence ID" value="CAD09535.1"/>
    <property type="molecule type" value="Genomic_DNA"/>
</dbReference>
<dbReference type="RefSeq" id="NP_457964.1">
    <property type="nucleotide sequence ID" value="NC_003198.1"/>
</dbReference>
<dbReference type="RefSeq" id="WP_000051368.1">
    <property type="nucleotide sequence ID" value="NZ_WSUR01000010.1"/>
</dbReference>
<dbReference type="SMR" id="Q8Z2Y8"/>
<dbReference type="STRING" id="220341.gene:17587646"/>
<dbReference type="KEGG" id="stt:t3530"/>
<dbReference type="KEGG" id="sty:STY3782"/>
<dbReference type="PATRIC" id="fig|220341.7.peg.3860"/>
<dbReference type="eggNOG" id="COG3074">
    <property type="taxonomic scope" value="Bacteria"/>
</dbReference>
<dbReference type="HOGENOM" id="CLU_171174_2_0_6"/>
<dbReference type="OMA" id="REQQNGW"/>
<dbReference type="OrthoDB" id="6554593at2"/>
<dbReference type="Proteomes" id="UP000000541">
    <property type="component" value="Chromosome"/>
</dbReference>
<dbReference type="Proteomes" id="UP000002670">
    <property type="component" value="Chromosome"/>
</dbReference>
<dbReference type="GO" id="GO:0005737">
    <property type="term" value="C:cytoplasm"/>
    <property type="evidence" value="ECO:0007669"/>
    <property type="project" value="UniProtKB-SubCell"/>
</dbReference>
<dbReference type="GO" id="GO:0000917">
    <property type="term" value="P:division septum assembly"/>
    <property type="evidence" value="ECO:0007669"/>
    <property type="project" value="UniProtKB-KW"/>
</dbReference>
<dbReference type="GO" id="GO:0043093">
    <property type="term" value="P:FtsZ-dependent cytokinesis"/>
    <property type="evidence" value="ECO:0007669"/>
    <property type="project" value="UniProtKB-UniRule"/>
</dbReference>
<dbReference type="FunFam" id="1.20.5.340:FF:000014">
    <property type="entry name" value="Cell division protein ZapB"/>
    <property type="match status" value="1"/>
</dbReference>
<dbReference type="Gene3D" id="1.20.5.340">
    <property type="match status" value="1"/>
</dbReference>
<dbReference type="HAMAP" id="MF_01196">
    <property type="entry name" value="ZapB"/>
    <property type="match status" value="1"/>
</dbReference>
<dbReference type="InterPro" id="IPR009252">
    <property type="entry name" value="Cell_div_ZapB"/>
</dbReference>
<dbReference type="NCBIfam" id="NF011951">
    <property type="entry name" value="PRK15422.1"/>
    <property type="match status" value="1"/>
</dbReference>
<dbReference type="Pfam" id="PF06005">
    <property type="entry name" value="ZapB"/>
    <property type="match status" value="1"/>
</dbReference>
<feature type="chain" id="PRO_0000333918" description="Cell division protein ZapB">
    <location>
        <begin position="1"/>
        <end position="79"/>
    </location>
</feature>
<feature type="coiled-coil region" evidence="1">
    <location>
        <begin position="3"/>
        <end position="79"/>
    </location>
</feature>
<proteinExistence type="inferred from homology"/>
<evidence type="ECO:0000255" key="1">
    <source>
        <dbReference type="HAMAP-Rule" id="MF_01196"/>
    </source>
</evidence>
<name>ZAPB_SALTI</name>
<keyword id="KW-0131">Cell cycle</keyword>
<keyword id="KW-0132">Cell division</keyword>
<keyword id="KW-0175">Coiled coil</keyword>
<keyword id="KW-0963">Cytoplasm</keyword>
<keyword id="KW-0717">Septation</keyword>
<gene>
    <name evidence="1" type="primary">zapB</name>
    <name type="ordered locus">STY3782</name>
    <name type="ordered locus">t3530</name>
</gene>